<organism>
    <name type="scientific">Neosartorya fischeri (strain ATCC 1020 / DSM 3700 / CBS 544.65 / FGSC A1164 / JCM 1740 / NRRL 181 / WB 181)</name>
    <name type="common">Aspergillus fischerianus</name>
    <dbReference type="NCBI Taxonomy" id="331117"/>
    <lineage>
        <taxon>Eukaryota</taxon>
        <taxon>Fungi</taxon>
        <taxon>Dikarya</taxon>
        <taxon>Ascomycota</taxon>
        <taxon>Pezizomycotina</taxon>
        <taxon>Eurotiomycetes</taxon>
        <taxon>Eurotiomycetidae</taxon>
        <taxon>Eurotiales</taxon>
        <taxon>Aspergillaceae</taxon>
        <taxon>Aspergillus</taxon>
        <taxon>Aspergillus subgen. Fumigati</taxon>
    </lineage>
</organism>
<accession>A1DP19</accession>
<feature type="chain" id="PRO_0000405085" description="Nuclear distribution protein nudF">
    <location>
        <begin position="1"/>
        <end position="441"/>
    </location>
</feature>
<feature type="domain" description="LisH" evidence="1">
    <location>
        <begin position="9"/>
        <end position="41"/>
    </location>
</feature>
<feature type="repeat" description="WD 1">
    <location>
        <begin position="87"/>
        <end position="128"/>
    </location>
</feature>
<feature type="repeat" description="WD 2">
    <location>
        <begin position="130"/>
        <end position="170"/>
    </location>
</feature>
<feature type="repeat" description="WD 3">
    <location>
        <begin position="174"/>
        <end position="221"/>
    </location>
</feature>
<feature type="repeat" description="WD 4">
    <location>
        <begin position="224"/>
        <end position="263"/>
    </location>
</feature>
<feature type="repeat" description="WD 5">
    <location>
        <begin position="266"/>
        <end position="326"/>
    </location>
</feature>
<feature type="repeat" description="WD 6">
    <location>
        <begin position="328"/>
        <end position="367"/>
    </location>
</feature>
<feature type="repeat" description="WD 7">
    <location>
        <begin position="372"/>
        <end position="402"/>
    </location>
</feature>
<feature type="repeat" description="WD 8">
    <location>
        <begin position="403"/>
        <end position="440"/>
    </location>
</feature>
<feature type="region of interest" description="Disordered" evidence="2">
    <location>
        <begin position="390"/>
        <end position="415"/>
    </location>
</feature>
<feature type="compositionally biased region" description="Low complexity" evidence="2">
    <location>
        <begin position="398"/>
        <end position="410"/>
    </location>
</feature>
<comment type="function">
    <text evidence="1">Positively regulates the activity of the minus-end directed microtubule motor protein dynein. May enhance dynein-mediated microtubule sliding by targeting dynein to the microtubule plus end. Required for nuclear migration during vegetative growth as well as development. Required for retrograde early endosome (EE) transport from the hyphal tip. Required for localization of dynein to the mitotic spindle poles. Recruits additional proteins to the dynein complex at SPBs.</text>
</comment>
<comment type="subunit">
    <text evidence="1">Self-associates. Interacts with nudE and dynein.</text>
</comment>
<comment type="subcellular location">
    <subcellularLocation>
        <location evidence="1">Cytoplasm</location>
        <location evidence="1">Cytoskeleton</location>
    </subcellularLocation>
    <subcellularLocation>
        <location evidence="1">Cytoplasm</location>
        <location evidence="1">Cytoskeleton</location>
        <location evidence="1">Spindle pole</location>
    </subcellularLocation>
    <text evidence="1">Localizes to the plus ends of microtubules at the hyphal tip and the mitotic spindle poles.</text>
</comment>
<comment type="domain">
    <text evidence="1">Dimerization mediated by the LisH domain may be required to activate dynein.</text>
</comment>
<comment type="similarity">
    <text evidence="1">Belongs to the WD repeat LIS1/nudF family.</text>
</comment>
<evidence type="ECO:0000255" key="1">
    <source>
        <dbReference type="HAMAP-Rule" id="MF_03141"/>
    </source>
</evidence>
<evidence type="ECO:0000256" key="2">
    <source>
        <dbReference type="SAM" id="MobiDB-lite"/>
    </source>
</evidence>
<gene>
    <name evidence="1" type="primary">nudF</name>
    <name evidence="1" type="synonym">lis1</name>
    <name type="ORF">NFIA_058910</name>
</gene>
<proteinExistence type="inferred from homology"/>
<dbReference type="EMBL" id="DS027698">
    <property type="protein sequence ID" value="EAW16540.1"/>
    <property type="molecule type" value="Genomic_DNA"/>
</dbReference>
<dbReference type="RefSeq" id="XP_001258437.1">
    <property type="nucleotide sequence ID" value="XM_001258436.1"/>
</dbReference>
<dbReference type="SMR" id="A1DP19"/>
<dbReference type="STRING" id="331117.A1DP19"/>
<dbReference type="EnsemblFungi" id="EAW16540">
    <property type="protein sequence ID" value="EAW16540"/>
    <property type="gene ID" value="NFIA_058910"/>
</dbReference>
<dbReference type="GeneID" id="4584953"/>
<dbReference type="KEGG" id="nfi:NFIA_058910"/>
<dbReference type="VEuPathDB" id="FungiDB:NFIA_058910"/>
<dbReference type="eggNOG" id="KOG0295">
    <property type="taxonomic scope" value="Eukaryota"/>
</dbReference>
<dbReference type="HOGENOM" id="CLU_000288_57_15_1"/>
<dbReference type="OMA" id="WHVATKE"/>
<dbReference type="OrthoDB" id="10264588at2759"/>
<dbReference type="Proteomes" id="UP000006702">
    <property type="component" value="Unassembled WGS sequence"/>
</dbReference>
<dbReference type="GO" id="GO:0005737">
    <property type="term" value="C:cytoplasm"/>
    <property type="evidence" value="ECO:0007669"/>
    <property type="project" value="UniProtKB-UniRule"/>
</dbReference>
<dbReference type="GO" id="GO:0005874">
    <property type="term" value="C:microtubule"/>
    <property type="evidence" value="ECO:0007669"/>
    <property type="project" value="UniProtKB-KW"/>
</dbReference>
<dbReference type="GO" id="GO:0005875">
    <property type="term" value="C:microtubule associated complex"/>
    <property type="evidence" value="ECO:0007669"/>
    <property type="project" value="UniProtKB-UniRule"/>
</dbReference>
<dbReference type="GO" id="GO:0000922">
    <property type="term" value="C:spindle pole"/>
    <property type="evidence" value="ECO:0007669"/>
    <property type="project" value="UniProtKB-SubCell"/>
</dbReference>
<dbReference type="GO" id="GO:0070840">
    <property type="term" value="F:dynein complex binding"/>
    <property type="evidence" value="ECO:0007669"/>
    <property type="project" value="UniProtKB-UniRule"/>
</dbReference>
<dbReference type="GO" id="GO:0051301">
    <property type="term" value="P:cell division"/>
    <property type="evidence" value="ECO:0007669"/>
    <property type="project" value="UniProtKB-KW"/>
</dbReference>
<dbReference type="GO" id="GO:0000132">
    <property type="term" value="P:establishment of mitotic spindle orientation"/>
    <property type="evidence" value="ECO:0007669"/>
    <property type="project" value="UniProtKB-UniRule"/>
</dbReference>
<dbReference type="GO" id="GO:0051012">
    <property type="term" value="P:microtubule sliding"/>
    <property type="evidence" value="ECO:0007669"/>
    <property type="project" value="UniProtKB-UniRule"/>
</dbReference>
<dbReference type="CDD" id="cd00200">
    <property type="entry name" value="WD40"/>
    <property type="match status" value="1"/>
</dbReference>
<dbReference type="Gene3D" id="1.20.960.30">
    <property type="match status" value="1"/>
</dbReference>
<dbReference type="Gene3D" id="2.130.10.10">
    <property type="entry name" value="YVTN repeat-like/Quinoprotein amine dehydrogenase"/>
    <property type="match status" value="1"/>
</dbReference>
<dbReference type="HAMAP" id="MF_03141">
    <property type="entry name" value="lis1"/>
    <property type="match status" value="1"/>
</dbReference>
<dbReference type="InterPro" id="IPR017252">
    <property type="entry name" value="Dynein_regulator_LIS1"/>
</dbReference>
<dbReference type="InterPro" id="IPR020472">
    <property type="entry name" value="G-protein_beta_WD-40_rep"/>
</dbReference>
<dbReference type="InterPro" id="IPR037190">
    <property type="entry name" value="LIS1_N"/>
</dbReference>
<dbReference type="InterPro" id="IPR006594">
    <property type="entry name" value="LisH"/>
</dbReference>
<dbReference type="InterPro" id="IPR056795">
    <property type="entry name" value="PAC1-like_LisH-like_dom"/>
</dbReference>
<dbReference type="InterPro" id="IPR015943">
    <property type="entry name" value="WD40/YVTN_repeat-like_dom_sf"/>
</dbReference>
<dbReference type="InterPro" id="IPR019775">
    <property type="entry name" value="WD40_repeat_CS"/>
</dbReference>
<dbReference type="InterPro" id="IPR036322">
    <property type="entry name" value="WD40_repeat_dom_sf"/>
</dbReference>
<dbReference type="InterPro" id="IPR001680">
    <property type="entry name" value="WD40_rpt"/>
</dbReference>
<dbReference type="InterPro" id="IPR050349">
    <property type="entry name" value="WD_LIS1/nudF_dynein_reg"/>
</dbReference>
<dbReference type="PANTHER" id="PTHR44129">
    <property type="entry name" value="WD REPEAT-CONTAINING PROTEIN POP1"/>
    <property type="match status" value="1"/>
</dbReference>
<dbReference type="Pfam" id="PF24951">
    <property type="entry name" value="LisH_PAC1"/>
    <property type="match status" value="1"/>
</dbReference>
<dbReference type="Pfam" id="PF00400">
    <property type="entry name" value="WD40"/>
    <property type="match status" value="6"/>
</dbReference>
<dbReference type="PIRSF" id="PIRSF037647">
    <property type="entry name" value="Dynein_regulator_Lis1"/>
    <property type="match status" value="1"/>
</dbReference>
<dbReference type="PRINTS" id="PR00320">
    <property type="entry name" value="GPROTEINBRPT"/>
</dbReference>
<dbReference type="SMART" id="SM00320">
    <property type="entry name" value="WD40"/>
    <property type="match status" value="7"/>
</dbReference>
<dbReference type="SUPFAM" id="SSF109925">
    <property type="entry name" value="Lissencephaly-1 protein (Lis-1, PAF-AH alpha) N-terminal domain"/>
    <property type="match status" value="1"/>
</dbReference>
<dbReference type="SUPFAM" id="SSF50978">
    <property type="entry name" value="WD40 repeat-like"/>
    <property type="match status" value="1"/>
</dbReference>
<dbReference type="PROSITE" id="PS50896">
    <property type="entry name" value="LISH"/>
    <property type="match status" value="1"/>
</dbReference>
<dbReference type="PROSITE" id="PS00678">
    <property type="entry name" value="WD_REPEATS_1"/>
    <property type="match status" value="1"/>
</dbReference>
<dbReference type="PROSITE" id="PS50082">
    <property type="entry name" value="WD_REPEATS_2"/>
    <property type="match status" value="6"/>
</dbReference>
<dbReference type="PROSITE" id="PS50294">
    <property type="entry name" value="WD_REPEATS_REGION"/>
    <property type="match status" value="1"/>
</dbReference>
<keyword id="KW-0131">Cell cycle</keyword>
<keyword id="KW-0132">Cell division</keyword>
<keyword id="KW-0175">Coiled coil</keyword>
<keyword id="KW-0963">Cytoplasm</keyword>
<keyword id="KW-0206">Cytoskeleton</keyword>
<keyword id="KW-0493">Microtubule</keyword>
<keyword id="KW-0498">Mitosis</keyword>
<keyword id="KW-1185">Reference proteome</keyword>
<keyword id="KW-0677">Repeat</keyword>
<keyword id="KW-0813">Transport</keyword>
<keyword id="KW-0853">WD repeat</keyword>
<name>LIS1_NEOFI</name>
<sequence>MSQLLTARQAEELHKSIIAYLASVNLTESSAALRAELGDSVSIDDATLKKYEGLLEKKWTSVVRLQKKNQDPTSWLPRSPARHILEGHREPVTCVAFHPVFSSLASGSDDTTIKIWDWELGELERTVKGHTKAVLDVDYGGPRGGTLLASCSSDLTIKLWDPSDNYKNIRTLPGHDHSVSSVRFIPSGAAGSPMSGNLLVSASRDKTLRIWDVTTGYCVKTLSGHVDWVRAVAPSLDGRFLFAAGDDRIPRLWDLSSAETKSTFLGHEHVIECVAIAPAASYPHLAVLSGLKKPPPVSSSAEFFATGSRDKTIRLWDSRGNLIKTLVGHDNWVRALAFHPGGKHLLSVADDKTIRCWDLTQECKCVRVISDAHGHFVTCLRWAPPLIKDGGANGESETNGAPAATATTNGVRPDPNAANKISIRCVIATGSVDRKVRIFAT</sequence>
<protein>
    <recommendedName>
        <fullName evidence="1">Nuclear distribution protein nudF</fullName>
    </recommendedName>
    <alternativeName>
        <fullName evidence="1">Lissencephaly-1 homolog</fullName>
        <shortName evidence="1">LIS-1</shortName>
    </alternativeName>
</protein>
<reference key="1">
    <citation type="journal article" date="2008" name="PLoS Genet.">
        <title>Genomic islands in the pathogenic filamentous fungus Aspergillus fumigatus.</title>
        <authorList>
            <person name="Fedorova N.D."/>
            <person name="Khaldi N."/>
            <person name="Joardar V.S."/>
            <person name="Maiti R."/>
            <person name="Amedeo P."/>
            <person name="Anderson M.J."/>
            <person name="Crabtree J."/>
            <person name="Silva J.C."/>
            <person name="Badger J.H."/>
            <person name="Albarraq A."/>
            <person name="Angiuoli S."/>
            <person name="Bussey H."/>
            <person name="Bowyer P."/>
            <person name="Cotty P.J."/>
            <person name="Dyer P.S."/>
            <person name="Egan A."/>
            <person name="Galens K."/>
            <person name="Fraser-Liggett C.M."/>
            <person name="Haas B.J."/>
            <person name="Inman J.M."/>
            <person name="Kent R."/>
            <person name="Lemieux S."/>
            <person name="Malavazi I."/>
            <person name="Orvis J."/>
            <person name="Roemer T."/>
            <person name="Ronning C.M."/>
            <person name="Sundaram J.P."/>
            <person name="Sutton G."/>
            <person name="Turner G."/>
            <person name="Venter J.C."/>
            <person name="White O.R."/>
            <person name="Whitty B.R."/>
            <person name="Youngman P."/>
            <person name="Wolfe K.H."/>
            <person name="Goldman G.H."/>
            <person name="Wortman J.R."/>
            <person name="Jiang B."/>
            <person name="Denning D.W."/>
            <person name="Nierman W.C."/>
        </authorList>
    </citation>
    <scope>NUCLEOTIDE SEQUENCE [LARGE SCALE GENOMIC DNA]</scope>
    <source>
        <strain>ATCC 1020 / DSM 3700 / CBS 544.65 / FGSC A1164 / JCM 1740 / NRRL 181 / WB 181</strain>
    </source>
</reference>